<comment type="function">
    <text evidence="1 6 7 8 9 10 11 12">Presents phospholipase and nuclease activities, depending on the different physiological conditions (PubMed:17028579, PubMed:21397847, PubMed:28063496). Interaction with Mitoguardin (MIGA1 or MIGA2) affects the dimer conformation, facilitating the lipase activity over the nuclease activity (PubMed:26711011). Plays a key role in mitochondrial fusion and fission via its phospholipase activity (PubMed:17028579, PubMed:24599962, PubMed:26678338). In its phospholipase role, it uses the mitochondrial lipid cardiolipin as substrate to generate phosphatidate (PA or 1,2-diacyl-sn-glycero-3-phosphate), a second messenger signaling lipid (PubMed:17028579, PubMed:26711011). Production of PA facilitates Mitofusin-mediated fusion, whereas the cleavage of PA by the Lipin family of phosphatases produces diacylgycerol (DAG) which promotes mitochondrial fission (PubMed:24599962). Both Lipin and DAG regulate mitochondrial dynamics and membrane fusion/fission, important processes for adapting mitochondrial metabolism to changes in cell physiology. Mitochondrial fusion enables cells to cope with the increased nucleotide demand during DNA synthesis (PubMed:26678338). Mitochondrial function and dynamics are closely associated with biological processes such as cell growth, proliferation, and differentiation (PubMed:21397848). Mediator of MYC activity, promotes mitochondrial fusion and activates AMPK which in turn inhibits YAP/TAZ, thereby inducing cell growth and proliferation (PubMed:26678338). The endonuclease activity plays a critical role in PIWI-interacting RNA (piRNA) biogenesis during spermatogenesis (PubMed:21397847, PubMed:21397848). Implicated in spermatogenesis and sperm fertility in testicular germ cells, its single strand-specific nuclease activity is critical for the biogenesis/maturation of PIWI-interacting RNA (piRNA). MOV10L1 selectively binds to piRNA precursors and funnels them to the endonuclease that catalyzes the first cleavage step of piRNA processing to generate piRNA intermediate fragments that are subsequently loaded to Piwi proteins. Cleaves either DNA or RNA substrates with similar affinity, producing a 5' phosphate end, in this way it participates in the processing of primary piRNA transcripts. piRNAs provide essential protection against the activity of mobile genetic elements. piRNA-mediated transposon silencing is thus critical for maintaining genome stability, in particular in germline cells when transposons are mobilized as a consequence of wide-spread genomic demethylation (By similarity). PA may act as signaling molecule in the recognition/transport of the precursor RNAs of primary piRNAs (PubMed:21397847). Interacts with tesmin in testes, suggesting a role in spermatogenesis via association with its interacting partner (By similarity).</text>
</comment>
<comment type="catalytic activity">
    <reaction evidence="6 11 18">
        <text>a cardiolipin + H2O = a 1,2-diacyl-sn-glycero-3-phospho-(1'-sn-glycerol) + a 1,2-diacyl-sn-glycero-3-phosphate + H(+)</text>
        <dbReference type="Rhea" id="RHEA:44884"/>
        <dbReference type="ChEBI" id="CHEBI:15377"/>
        <dbReference type="ChEBI" id="CHEBI:15378"/>
        <dbReference type="ChEBI" id="CHEBI:58608"/>
        <dbReference type="ChEBI" id="CHEBI:62237"/>
        <dbReference type="ChEBI" id="CHEBI:64716"/>
    </reaction>
    <physiologicalReaction direction="left-to-right" evidence="6 11 18">
        <dbReference type="Rhea" id="RHEA:44885"/>
    </physiologicalReaction>
</comment>
<comment type="activity regulation">
    <text evidence="1 10 11">MYC stimulates its phospholipase activity (PubMed:26678338). MIGA1 and MIGA2 increase PLD6 self-association affinity and affects the homodimer conformation facilitating its phospholipase activity over the nuclease activity (PubMed:26711011). Single stranded DNA (ssDNA) hydrolase activity does not depend upon, but is stimulated by the presence of Ca(2+) and Mn(2+) (By similarity).</text>
</comment>
<comment type="subunit">
    <text evidence="1 6 11 13">Homodimer (PubMed:17028579). Interacts with MOV10L1 (By similarity). Interacts with MIGA1 and MIGA2; possibly facilitating homodimer formation (PubMed:26711011). Interacts with GK2 (PubMed:28852571).</text>
</comment>
<comment type="subcellular location">
    <subcellularLocation>
        <location evidence="6">Mitochondrion outer membrane</location>
        <topology evidence="6">Single-pass membrane protein</topology>
    </subcellularLocation>
    <subcellularLocation>
        <location evidence="1">Golgi apparatus</location>
    </subcellularLocation>
    <text evidence="17">Localization in the mitochondrial outer membrane is found in different cell types where phospholipase is the predominant activity, however, in pachytene spermatocytes and spermatids of mouse testes where nuclease activity is predominant, localization is restricted to the Golgi, suggesting this enzyme is localized in different subcellular compartments depending on the role (phospholipase or nuclease) it needs to play in each cell type and developmental stage.</text>
</comment>
<comment type="tissue specificity">
    <text evidence="6 7">Predominantly expressed in testis and ovary, but not limited to gonads (at protein level) (PubMed:17028579, PubMed:21397847). It is also found in brain, heart, pituitary gland, prostate, pancreas, thyroid, bone marrow, lung and muscle (PubMed:21397847).</text>
</comment>
<comment type="domain">
    <text evidence="6">In contrast to other members of the phospholipase D family, contains only one PLD phosphodiesterase domain, suggesting that it has a single half-catalytic and requires homodimerization to form a complete active site.</text>
</comment>
<comment type="similarity">
    <text evidence="17">Belongs to the phospholipase D family. MitoPLD/Zucchini subfamily.</text>
</comment>
<comment type="caution">
    <text evidence="1">Evidence for subcellular location in the Golgi was determined in pachytene spermatocytes and spermatids in mouse testes. They observe that the ectopically expressed PLD6 protein was localized to the mitochondria in PLD6-transfected cells. Authors claim a possible explanation for the contradictory results is that previous studies have reported the localization of exogenous PLD6, but not endogenous PLD6, in cultured cells. The reason for differences observed in subcellular localization of exogenous and endogenous PLD6 is not clear but one attributable reason may be that different types of anti-PLD6 antibodies have been used in previous studies.</text>
</comment>
<name>PLD6_HUMAN</name>
<accession>Q8N2A8</accession>
<accession>Q8N5Y1</accession>
<protein>
    <recommendedName>
        <fullName>Mitochondrial cardiolipin hydrolase</fullName>
        <ecNumber evidence="6 11 18">3.1.4.-</ecNumber>
    </recommendedName>
    <alternativeName>
        <fullName>Choline phosphatase 6</fullName>
    </alternativeName>
    <alternativeName>
        <fullName evidence="14">Mitochondrial phospholipase</fullName>
        <shortName evidence="14 15">MitoPLD</shortName>
    </alternativeName>
    <alternativeName>
        <fullName>Phosphatidylcholine-hydrolyzing phospholipase D6</fullName>
    </alternativeName>
    <alternativeName>
        <fullName>Phospholipase D6</fullName>
        <shortName evidence="16">PLD6</shortName>
    </alternativeName>
    <alternativeName>
        <fullName evidence="2">Protein zucchini homolog</fullName>
    </alternativeName>
</protein>
<reference key="1">
    <citation type="journal article" date="2004" name="Nat. Genet.">
        <title>Complete sequencing and characterization of 21,243 full-length human cDNAs.</title>
        <authorList>
            <person name="Ota T."/>
            <person name="Suzuki Y."/>
            <person name="Nishikawa T."/>
            <person name="Otsuki T."/>
            <person name="Sugiyama T."/>
            <person name="Irie R."/>
            <person name="Wakamatsu A."/>
            <person name="Hayashi K."/>
            <person name="Sato H."/>
            <person name="Nagai K."/>
            <person name="Kimura K."/>
            <person name="Makita H."/>
            <person name="Sekine M."/>
            <person name="Obayashi M."/>
            <person name="Nishi T."/>
            <person name="Shibahara T."/>
            <person name="Tanaka T."/>
            <person name="Ishii S."/>
            <person name="Yamamoto J."/>
            <person name="Saito K."/>
            <person name="Kawai Y."/>
            <person name="Isono Y."/>
            <person name="Nakamura Y."/>
            <person name="Nagahari K."/>
            <person name="Murakami K."/>
            <person name="Yasuda T."/>
            <person name="Iwayanagi T."/>
            <person name="Wagatsuma M."/>
            <person name="Shiratori A."/>
            <person name="Sudo H."/>
            <person name="Hosoiri T."/>
            <person name="Kaku Y."/>
            <person name="Kodaira H."/>
            <person name="Kondo H."/>
            <person name="Sugawara M."/>
            <person name="Takahashi M."/>
            <person name="Kanda K."/>
            <person name="Yokoi T."/>
            <person name="Furuya T."/>
            <person name="Kikkawa E."/>
            <person name="Omura Y."/>
            <person name="Abe K."/>
            <person name="Kamihara K."/>
            <person name="Katsuta N."/>
            <person name="Sato K."/>
            <person name="Tanikawa M."/>
            <person name="Yamazaki M."/>
            <person name="Ninomiya K."/>
            <person name="Ishibashi T."/>
            <person name="Yamashita H."/>
            <person name="Murakawa K."/>
            <person name="Fujimori K."/>
            <person name="Tanai H."/>
            <person name="Kimata M."/>
            <person name="Watanabe M."/>
            <person name="Hiraoka S."/>
            <person name="Chiba Y."/>
            <person name="Ishida S."/>
            <person name="Ono Y."/>
            <person name="Takiguchi S."/>
            <person name="Watanabe S."/>
            <person name="Yosida M."/>
            <person name="Hotuta T."/>
            <person name="Kusano J."/>
            <person name="Kanehori K."/>
            <person name="Takahashi-Fujii A."/>
            <person name="Hara H."/>
            <person name="Tanase T.-O."/>
            <person name="Nomura Y."/>
            <person name="Togiya S."/>
            <person name="Komai F."/>
            <person name="Hara R."/>
            <person name="Takeuchi K."/>
            <person name="Arita M."/>
            <person name="Imose N."/>
            <person name="Musashino K."/>
            <person name="Yuuki H."/>
            <person name="Oshima A."/>
            <person name="Sasaki N."/>
            <person name="Aotsuka S."/>
            <person name="Yoshikawa Y."/>
            <person name="Matsunawa H."/>
            <person name="Ichihara T."/>
            <person name="Shiohata N."/>
            <person name="Sano S."/>
            <person name="Moriya S."/>
            <person name="Momiyama H."/>
            <person name="Satoh N."/>
            <person name="Takami S."/>
            <person name="Terashima Y."/>
            <person name="Suzuki O."/>
            <person name="Nakagawa S."/>
            <person name="Senoh A."/>
            <person name="Mizoguchi H."/>
            <person name="Goto Y."/>
            <person name="Shimizu F."/>
            <person name="Wakebe H."/>
            <person name="Hishigaki H."/>
            <person name="Watanabe T."/>
            <person name="Sugiyama A."/>
            <person name="Takemoto M."/>
            <person name="Kawakami B."/>
            <person name="Yamazaki M."/>
            <person name="Watanabe K."/>
            <person name="Kumagai A."/>
            <person name="Itakura S."/>
            <person name="Fukuzumi Y."/>
            <person name="Fujimori Y."/>
            <person name="Komiyama M."/>
            <person name="Tashiro H."/>
            <person name="Tanigami A."/>
            <person name="Fujiwara T."/>
            <person name="Ono T."/>
            <person name="Yamada K."/>
            <person name="Fujii Y."/>
            <person name="Ozaki K."/>
            <person name="Hirao M."/>
            <person name="Ohmori Y."/>
            <person name="Kawabata A."/>
            <person name="Hikiji T."/>
            <person name="Kobatake N."/>
            <person name="Inagaki H."/>
            <person name="Ikema Y."/>
            <person name="Okamoto S."/>
            <person name="Okitani R."/>
            <person name="Kawakami T."/>
            <person name="Noguchi S."/>
            <person name="Itoh T."/>
            <person name="Shigeta K."/>
            <person name="Senba T."/>
            <person name="Matsumura K."/>
            <person name="Nakajima Y."/>
            <person name="Mizuno T."/>
            <person name="Morinaga M."/>
            <person name="Sasaki M."/>
            <person name="Togashi T."/>
            <person name="Oyama M."/>
            <person name="Hata H."/>
            <person name="Watanabe M."/>
            <person name="Komatsu T."/>
            <person name="Mizushima-Sugano J."/>
            <person name="Satoh T."/>
            <person name="Shirai Y."/>
            <person name="Takahashi Y."/>
            <person name="Nakagawa K."/>
            <person name="Okumura K."/>
            <person name="Nagase T."/>
            <person name="Nomura N."/>
            <person name="Kikuchi H."/>
            <person name="Masuho Y."/>
            <person name="Yamashita R."/>
            <person name="Nakai K."/>
            <person name="Yada T."/>
            <person name="Nakamura Y."/>
            <person name="Ohara O."/>
            <person name="Isogai T."/>
            <person name="Sugano S."/>
        </authorList>
    </citation>
    <scope>NUCLEOTIDE SEQUENCE [LARGE SCALE MRNA]</scope>
    <source>
        <tissue>Amygdala</tissue>
    </source>
</reference>
<reference key="2">
    <citation type="journal article" date="2006" name="Nature">
        <title>DNA sequence of human chromosome 17 and analysis of rearrangement in the human lineage.</title>
        <authorList>
            <person name="Zody M.C."/>
            <person name="Garber M."/>
            <person name="Adams D.J."/>
            <person name="Sharpe T."/>
            <person name="Harrow J."/>
            <person name="Lupski J.R."/>
            <person name="Nicholson C."/>
            <person name="Searle S.M."/>
            <person name="Wilming L."/>
            <person name="Young S.K."/>
            <person name="Abouelleil A."/>
            <person name="Allen N.R."/>
            <person name="Bi W."/>
            <person name="Bloom T."/>
            <person name="Borowsky M.L."/>
            <person name="Bugalter B.E."/>
            <person name="Butler J."/>
            <person name="Chang J.L."/>
            <person name="Chen C.-K."/>
            <person name="Cook A."/>
            <person name="Corum B."/>
            <person name="Cuomo C.A."/>
            <person name="de Jong P.J."/>
            <person name="DeCaprio D."/>
            <person name="Dewar K."/>
            <person name="FitzGerald M."/>
            <person name="Gilbert J."/>
            <person name="Gibson R."/>
            <person name="Gnerre S."/>
            <person name="Goldstein S."/>
            <person name="Grafham D.V."/>
            <person name="Grocock R."/>
            <person name="Hafez N."/>
            <person name="Hagopian D.S."/>
            <person name="Hart E."/>
            <person name="Norman C.H."/>
            <person name="Humphray S."/>
            <person name="Jaffe D.B."/>
            <person name="Jones M."/>
            <person name="Kamal M."/>
            <person name="Khodiyar V.K."/>
            <person name="LaButti K."/>
            <person name="Laird G."/>
            <person name="Lehoczky J."/>
            <person name="Liu X."/>
            <person name="Lokyitsang T."/>
            <person name="Loveland J."/>
            <person name="Lui A."/>
            <person name="Macdonald P."/>
            <person name="Major J.E."/>
            <person name="Matthews L."/>
            <person name="Mauceli E."/>
            <person name="McCarroll S.A."/>
            <person name="Mihalev A.H."/>
            <person name="Mudge J."/>
            <person name="Nguyen C."/>
            <person name="Nicol R."/>
            <person name="O'Leary S.B."/>
            <person name="Osoegawa K."/>
            <person name="Schwartz D.C."/>
            <person name="Shaw-Smith C."/>
            <person name="Stankiewicz P."/>
            <person name="Steward C."/>
            <person name="Swarbreck D."/>
            <person name="Venkataraman V."/>
            <person name="Whittaker C.A."/>
            <person name="Yang X."/>
            <person name="Zimmer A.R."/>
            <person name="Bradley A."/>
            <person name="Hubbard T."/>
            <person name="Birren B.W."/>
            <person name="Rogers J."/>
            <person name="Lander E.S."/>
            <person name="Nusbaum C."/>
        </authorList>
    </citation>
    <scope>NUCLEOTIDE SEQUENCE [LARGE SCALE GENOMIC DNA]</scope>
</reference>
<reference key="3">
    <citation type="journal article" date="2004" name="Genome Res.">
        <title>The status, quality, and expansion of the NIH full-length cDNA project: the Mammalian Gene Collection (MGC).</title>
        <authorList>
            <consortium name="The MGC Project Team"/>
        </authorList>
    </citation>
    <scope>NUCLEOTIDE SEQUENCE [LARGE SCALE MRNA]</scope>
    <scope>VARIANTS PRO-42 AND HIS-108</scope>
    <source>
        <tissue>Brain</tissue>
    </source>
</reference>
<reference key="4">
    <citation type="journal article" date="2006" name="Nat. Cell Biol.">
        <title>A common lipid links Mfn-mediated mitochondrial fusion and SNARE-regulated exocytosis.</title>
        <authorList>
            <person name="Choi S.Y."/>
            <person name="Huang P."/>
            <person name="Jenkins G.M."/>
            <person name="Chan D.C."/>
            <person name="Schiller J."/>
            <person name="Frohman M.A."/>
        </authorList>
    </citation>
    <scope>FUNCTION</scope>
    <scope>CATALYTIC ACTIVITY</scope>
    <scope>SUBCELLULAR LOCATION</scope>
    <scope>TOPOLOGY</scope>
    <scope>SUBUNIT</scope>
    <scope>HOMODIMERIZATION</scope>
    <scope>TISSUE SPECIFICITY</scope>
    <scope>MUTAGENESIS OF HIS-156</scope>
</reference>
<reference key="5">
    <citation type="journal article" date="2011" name="Dev. Cell">
        <title>MITOPLD is a mitochondrial protein essential for nuage formation and piRNA biogenesis in the mouse germline.</title>
        <authorList>
            <person name="Watanabe T."/>
            <person name="Chuma S."/>
            <person name="Yamamoto Y."/>
            <person name="Kuramochi-Miyagawa S."/>
            <person name="Totoki Y."/>
            <person name="Toyoda A."/>
            <person name="Hoki Y."/>
            <person name="Fujiyama A."/>
            <person name="Shibata T."/>
            <person name="Sado T."/>
            <person name="Noce T."/>
            <person name="Nakano T."/>
            <person name="Nakatsuji N."/>
            <person name="Lin H."/>
            <person name="Sasaki H."/>
        </authorList>
    </citation>
    <scope>FUNCTION</scope>
    <scope>TISSUE SPECIFICITY</scope>
</reference>
<reference key="6">
    <citation type="journal article" date="2011" name="Dev. Cell">
        <title>piRNA-associated germline nuage formation and spermatogenesis require MitoPLD profusogenic mitochondrial-surface lipid signaling.</title>
        <authorList>
            <person name="Huang H."/>
            <person name="Gao Q."/>
            <person name="Peng X."/>
            <person name="Choi S.Y."/>
            <person name="Sarma K."/>
            <person name="Ren H."/>
            <person name="Morris A.J."/>
            <person name="Frohman M.A."/>
        </authorList>
    </citation>
    <scope>FUNCTION</scope>
    <scope>MUTAGENESIS OF HIS-156</scope>
</reference>
<reference key="7">
    <citation type="journal article" date="2014" name="J. Biol. Chem.">
        <title>Phosphatidic acid (PA)-preferring phospholipase A1 regulates mitochondrial dynamics.</title>
        <authorList>
            <person name="Baba T."/>
            <person name="Kashiwagi Y."/>
            <person name="Arimitsu N."/>
            <person name="Kogure T."/>
            <person name="Edo A."/>
            <person name="Maruyama T."/>
            <person name="Nakao K."/>
            <person name="Nakanishi H."/>
            <person name="Kinoshita M."/>
            <person name="Frohman M.A."/>
            <person name="Yamamoto A."/>
            <person name="Tani K."/>
        </authorList>
    </citation>
    <scope>FUNCTION</scope>
    <scope>CATALYTIC ACTIVITY</scope>
</reference>
<reference key="8">
    <citation type="journal article" date="2015" name="Cancer Cell">
        <title>A MYC-Driven Change in Mitochondrial Dynamics Limits YAP/TAZ Function in Mammary Epithelial Cells and Breast Cancer.</title>
        <authorList>
            <person name="von Eyss B."/>
            <person name="Jaenicke L.A."/>
            <person name="Kortlever R.M."/>
            <person name="Royla N."/>
            <person name="Wiese K.E."/>
            <person name="Letschert S."/>
            <person name="McDuffus L.A."/>
            <person name="Sauer M."/>
            <person name="Rosenwald A."/>
            <person name="Evan G.I."/>
            <person name="Kempa S."/>
            <person name="Eilers M."/>
        </authorList>
    </citation>
    <scope>FUNCTION</scope>
</reference>
<reference key="9">
    <citation type="journal article" date="2016" name="Mol. Cell">
        <title>Mitoguardin regulates mitochondrial fusion through MitoPLD and is required for neuronal homeostasis.</title>
        <authorList>
            <person name="Zhang Y."/>
            <person name="Liu X."/>
            <person name="Bai J."/>
            <person name="Tian X."/>
            <person name="Zhao X."/>
            <person name="Liu W."/>
            <person name="Duan X."/>
            <person name="Shang W."/>
            <person name="Fan H.Y."/>
            <person name="Tong C."/>
        </authorList>
    </citation>
    <scope>FUNCTION</scope>
    <scope>CATALYTIC ACTIVITY</scope>
    <scope>INTERACTION WITH MIGA1 AND MIGA2</scope>
</reference>
<reference key="10">
    <citation type="journal article" date="2017" name="Methods Enzymol.">
        <title>Measuring Phospholipase D Enzymatic Activity Through Biochemical and Imaging Methods.</title>
        <authorList>
            <person name="Philip F."/>
            <person name="Ha E.E."/>
            <person name="Seeliger M.A."/>
            <person name="Frohman M.A."/>
        </authorList>
    </citation>
    <scope>FUNCTION</scope>
</reference>
<reference key="11">
    <citation type="journal article" date="2017" name="Cell Discov.">
        <title>Glycerol kinase-like proteins cooperate with Pld6 in regulating sperm mitochondrial sheath formation and male fertility.</title>
        <authorList>
            <person name="Chen Y."/>
            <person name="Liang P."/>
            <person name="Huang Y."/>
            <person name="Li M."/>
            <person name="Zhang X."/>
            <person name="Ding C."/>
            <person name="Feng J."/>
            <person name="Zhang Z."/>
            <person name="Zhang X."/>
            <person name="Gao Y."/>
            <person name="Zhang Q."/>
            <person name="Cao S."/>
            <person name="Zheng H."/>
            <person name="Liu D."/>
            <person name="Songyang Z."/>
            <person name="Huang J."/>
        </authorList>
    </citation>
    <scope>INTERACTION WITH GK2</scope>
</reference>
<feature type="chain" id="PRO_0000325910" description="Mitochondrial cardiolipin hydrolase">
    <location>
        <begin position="1"/>
        <end position="252"/>
    </location>
</feature>
<feature type="topological domain" description="Mitochondrial intermembrane" evidence="3">
    <location>
        <begin position="1"/>
        <end position="4"/>
    </location>
</feature>
<feature type="transmembrane region" description="Helical" evidence="3">
    <location>
        <begin position="5"/>
        <end position="27"/>
    </location>
</feature>
<feature type="topological domain" description="Cytoplasmic" evidence="3">
    <location>
        <begin position="28"/>
        <end position="252"/>
    </location>
</feature>
<feature type="domain" description="PLD phosphodiesterase" evidence="4">
    <location>
        <begin position="151"/>
        <end position="178"/>
    </location>
</feature>
<feature type="zinc finger region" description="C3H1-type; atypical">
    <location>
        <begin position="45"/>
        <end position="78"/>
    </location>
</feature>
<feature type="region of interest" description="Required for mitochondrial localization">
    <location>
        <begin position="1"/>
        <end position="39"/>
    </location>
</feature>
<feature type="active site" evidence="17">
    <location>
        <position position="156"/>
    </location>
</feature>
<feature type="active site" evidence="4">
    <location>
        <position position="158"/>
    </location>
</feature>
<feature type="active site" evidence="4">
    <location>
        <position position="163"/>
    </location>
</feature>
<feature type="sequence variant" id="VAR_039951" description="In dbSNP:rs17856924." evidence="5">
    <original>L</original>
    <variation>P</variation>
    <location>
        <position position="42"/>
    </location>
</feature>
<feature type="sequence variant" id="VAR_039952" description="In dbSNP:rs11551966." evidence="5">
    <original>R</original>
    <variation>H</variation>
    <location>
        <position position="108"/>
    </location>
</feature>
<feature type="mutagenesis site" description="Mitochondrial fragmentation. No apoptosis, no alterations of cell homeostasis." evidence="6 8">
    <original>H</original>
    <variation>N</variation>
    <location>
        <position position="156"/>
    </location>
</feature>
<proteinExistence type="evidence at protein level"/>
<organism>
    <name type="scientific">Homo sapiens</name>
    <name type="common">Human</name>
    <dbReference type="NCBI Taxonomy" id="9606"/>
    <lineage>
        <taxon>Eukaryota</taxon>
        <taxon>Metazoa</taxon>
        <taxon>Chordata</taxon>
        <taxon>Craniata</taxon>
        <taxon>Vertebrata</taxon>
        <taxon>Euteleostomi</taxon>
        <taxon>Mammalia</taxon>
        <taxon>Eutheria</taxon>
        <taxon>Euarchontoglires</taxon>
        <taxon>Primates</taxon>
        <taxon>Haplorrhini</taxon>
        <taxon>Catarrhini</taxon>
        <taxon>Hominidae</taxon>
        <taxon>Homo</taxon>
    </lineage>
</organism>
<dbReference type="EC" id="3.1.4.-" evidence="6 11 18"/>
<dbReference type="EMBL" id="AK090899">
    <property type="protein sequence ID" value="BAC03541.1"/>
    <property type="molecule type" value="mRNA"/>
</dbReference>
<dbReference type="EMBL" id="AC055811">
    <property type="status" value="NOT_ANNOTATED_CDS"/>
    <property type="molecule type" value="Genomic_DNA"/>
</dbReference>
<dbReference type="EMBL" id="BC031263">
    <property type="protein sequence ID" value="AAH31263.1"/>
    <property type="molecule type" value="mRNA"/>
</dbReference>
<dbReference type="CCDS" id="CCDS11182.1"/>
<dbReference type="RefSeq" id="NP_849158.2">
    <property type="nucleotide sequence ID" value="NM_178836.4"/>
</dbReference>
<dbReference type="SMR" id="Q8N2A8"/>
<dbReference type="BioGRID" id="128367">
    <property type="interactions" value="155"/>
</dbReference>
<dbReference type="FunCoup" id="Q8N2A8">
    <property type="interactions" value="668"/>
</dbReference>
<dbReference type="IntAct" id="Q8N2A8">
    <property type="interactions" value="34"/>
</dbReference>
<dbReference type="STRING" id="9606.ENSP00000317177"/>
<dbReference type="SwissLipids" id="SLP:000001047"/>
<dbReference type="GlyGen" id="Q8N2A8">
    <property type="glycosylation" value="1 site, 1 O-linked glycan (1 site)"/>
</dbReference>
<dbReference type="iPTMnet" id="Q8N2A8"/>
<dbReference type="PhosphoSitePlus" id="Q8N2A8"/>
<dbReference type="SwissPalm" id="Q8N2A8"/>
<dbReference type="BioMuta" id="PLD6"/>
<dbReference type="DMDM" id="74728697"/>
<dbReference type="jPOST" id="Q8N2A8"/>
<dbReference type="MassIVE" id="Q8N2A8"/>
<dbReference type="PaxDb" id="9606-ENSP00000317177"/>
<dbReference type="PeptideAtlas" id="Q8N2A8"/>
<dbReference type="ProteomicsDB" id="71671"/>
<dbReference type="Pumba" id="Q8N2A8"/>
<dbReference type="Antibodypedia" id="63312">
    <property type="antibodies" value="87 antibodies from 21 providers"/>
</dbReference>
<dbReference type="DNASU" id="201164"/>
<dbReference type="Ensembl" id="ENST00000321560.4">
    <property type="protein sequence ID" value="ENSP00000317177.3"/>
    <property type="gene ID" value="ENSG00000179598.6"/>
</dbReference>
<dbReference type="GeneID" id="201164"/>
<dbReference type="KEGG" id="hsa:201164"/>
<dbReference type="MANE-Select" id="ENST00000321560.4">
    <property type="protein sequence ID" value="ENSP00000317177.3"/>
    <property type="RefSeq nucleotide sequence ID" value="NM_178836.4"/>
    <property type="RefSeq protein sequence ID" value="NP_849158.2"/>
</dbReference>
<dbReference type="UCSC" id="uc002gqz.4">
    <property type="organism name" value="human"/>
</dbReference>
<dbReference type="AGR" id="HGNC:30447"/>
<dbReference type="CTD" id="201164"/>
<dbReference type="DisGeNET" id="201164"/>
<dbReference type="GeneCards" id="PLD6"/>
<dbReference type="HGNC" id="HGNC:30447">
    <property type="gene designation" value="PLD6"/>
</dbReference>
<dbReference type="HPA" id="ENSG00000179598">
    <property type="expression patterns" value="Tissue enhanced (brain)"/>
</dbReference>
<dbReference type="MIM" id="614960">
    <property type="type" value="gene"/>
</dbReference>
<dbReference type="neXtProt" id="NX_Q8N2A8"/>
<dbReference type="OpenTargets" id="ENSG00000179598"/>
<dbReference type="PharmGKB" id="PA164724625"/>
<dbReference type="VEuPathDB" id="HostDB:ENSG00000179598"/>
<dbReference type="eggNOG" id="ENOG502RXG9">
    <property type="taxonomic scope" value="Eukaryota"/>
</dbReference>
<dbReference type="GeneTree" id="ENSGT00390000004368"/>
<dbReference type="HOGENOM" id="CLU_080814_0_1_1"/>
<dbReference type="InParanoid" id="Q8N2A8"/>
<dbReference type="OMA" id="RIWEEFD"/>
<dbReference type="OrthoDB" id="5205528at2759"/>
<dbReference type="PAN-GO" id="Q8N2A8">
    <property type="GO annotations" value="3 GO annotations based on evolutionary models"/>
</dbReference>
<dbReference type="PhylomeDB" id="Q8N2A8"/>
<dbReference type="TreeFam" id="TF332817"/>
<dbReference type="PathwayCommons" id="Q8N2A8"/>
<dbReference type="Reactome" id="R-HSA-1483148">
    <property type="pathway name" value="Synthesis of PG"/>
</dbReference>
<dbReference type="Reactome" id="R-HSA-1483166">
    <property type="pathway name" value="Synthesis of PA"/>
</dbReference>
<dbReference type="Reactome" id="R-HSA-5601884">
    <property type="pathway name" value="PIWI-interacting RNA (piRNA) biogenesis"/>
</dbReference>
<dbReference type="SignaLink" id="Q8N2A8"/>
<dbReference type="BioGRID-ORCS" id="201164">
    <property type="hits" value="8 hits in 1162 CRISPR screens"/>
</dbReference>
<dbReference type="ChiTaRS" id="PLD6">
    <property type="organism name" value="human"/>
</dbReference>
<dbReference type="GenomeRNAi" id="201164"/>
<dbReference type="Pharos" id="Q8N2A8">
    <property type="development level" value="Tbio"/>
</dbReference>
<dbReference type="PRO" id="PR:Q8N2A8"/>
<dbReference type="Proteomes" id="UP000005640">
    <property type="component" value="Chromosome 17"/>
</dbReference>
<dbReference type="RNAct" id="Q8N2A8">
    <property type="molecule type" value="protein"/>
</dbReference>
<dbReference type="Bgee" id="ENSG00000179598">
    <property type="expression patterns" value="Expressed in oviduct epithelium and 148 other cell types or tissues"/>
</dbReference>
<dbReference type="GO" id="GO:0005794">
    <property type="term" value="C:Golgi apparatus"/>
    <property type="evidence" value="ECO:0007669"/>
    <property type="project" value="UniProtKB-SubCell"/>
</dbReference>
<dbReference type="GO" id="GO:0005741">
    <property type="term" value="C:mitochondrial outer membrane"/>
    <property type="evidence" value="ECO:0000314"/>
    <property type="project" value="UniProtKB"/>
</dbReference>
<dbReference type="GO" id="GO:0005739">
    <property type="term" value="C:mitochondrion"/>
    <property type="evidence" value="ECO:0006056"/>
    <property type="project" value="FlyBase"/>
</dbReference>
<dbReference type="GO" id="GO:0035755">
    <property type="term" value="F:cardiolipin hydrolase activity"/>
    <property type="evidence" value="ECO:0000314"/>
    <property type="project" value="UniProtKB"/>
</dbReference>
<dbReference type="GO" id="GO:0042803">
    <property type="term" value="F:protein homodimerization activity"/>
    <property type="evidence" value="ECO:0000314"/>
    <property type="project" value="UniProtKB"/>
</dbReference>
<dbReference type="GO" id="GO:0016891">
    <property type="term" value="F:RNA endonuclease activity, producing 5'-phosphomonoesters"/>
    <property type="evidence" value="ECO:0000318"/>
    <property type="project" value="GO_Central"/>
</dbReference>
<dbReference type="GO" id="GO:0008270">
    <property type="term" value="F:zinc ion binding"/>
    <property type="evidence" value="ECO:0007669"/>
    <property type="project" value="UniProtKB-KW"/>
</dbReference>
<dbReference type="GO" id="GO:0016042">
    <property type="term" value="P:lipid catabolic process"/>
    <property type="evidence" value="ECO:0007669"/>
    <property type="project" value="UniProtKB-KW"/>
</dbReference>
<dbReference type="GO" id="GO:0051321">
    <property type="term" value="P:meiotic cell cycle"/>
    <property type="evidence" value="ECO:0000250"/>
    <property type="project" value="UniProtKB"/>
</dbReference>
<dbReference type="GO" id="GO:0008053">
    <property type="term" value="P:mitochondrial fusion"/>
    <property type="evidence" value="ECO:0000315"/>
    <property type="project" value="UniProtKB"/>
</dbReference>
<dbReference type="GO" id="GO:0030719">
    <property type="term" value="P:P granule organization"/>
    <property type="evidence" value="ECO:0000250"/>
    <property type="project" value="UniProtKB"/>
</dbReference>
<dbReference type="GO" id="GO:0034587">
    <property type="term" value="P:piRNA processing"/>
    <property type="evidence" value="ECO:0000318"/>
    <property type="project" value="GO_Central"/>
</dbReference>
<dbReference type="GO" id="GO:0010636">
    <property type="term" value="P:positive regulation of mitochondrial fusion"/>
    <property type="evidence" value="ECO:0000314"/>
    <property type="project" value="MGI"/>
</dbReference>
<dbReference type="GO" id="GO:0007286">
    <property type="term" value="P:spermatid development"/>
    <property type="evidence" value="ECO:0000250"/>
    <property type="project" value="UniProtKB"/>
</dbReference>
<dbReference type="CDD" id="cd09171">
    <property type="entry name" value="PLDc_vPLD6_like"/>
    <property type="match status" value="1"/>
</dbReference>
<dbReference type="FunFam" id="3.30.870.10:FF:000030">
    <property type="entry name" value="mitochondrial cardiolipin hydrolase"/>
    <property type="match status" value="1"/>
</dbReference>
<dbReference type="Gene3D" id="3.30.870.10">
    <property type="entry name" value="Endonuclease Chain A"/>
    <property type="match status" value="1"/>
</dbReference>
<dbReference type="InterPro" id="IPR025202">
    <property type="entry name" value="PLD-like_dom"/>
</dbReference>
<dbReference type="InterPro" id="IPR051406">
    <property type="entry name" value="PLD_domain"/>
</dbReference>
<dbReference type="InterPro" id="IPR001736">
    <property type="entry name" value="PLipase_D/transphosphatidylase"/>
</dbReference>
<dbReference type="PANTHER" id="PTHR43856">
    <property type="entry name" value="CARDIOLIPIN HYDROLASE"/>
    <property type="match status" value="1"/>
</dbReference>
<dbReference type="PANTHER" id="PTHR43856:SF1">
    <property type="entry name" value="MITOCHONDRIAL CARDIOLIPIN HYDROLASE"/>
    <property type="match status" value="1"/>
</dbReference>
<dbReference type="Pfam" id="PF13091">
    <property type="entry name" value="PLDc_2"/>
    <property type="match status" value="1"/>
</dbReference>
<dbReference type="SMART" id="SM00155">
    <property type="entry name" value="PLDc"/>
    <property type="match status" value="1"/>
</dbReference>
<dbReference type="SUPFAM" id="SSF56024">
    <property type="entry name" value="Phospholipase D/nuclease"/>
    <property type="match status" value="1"/>
</dbReference>
<dbReference type="PROSITE" id="PS50035">
    <property type="entry name" value="PLD"/>
    <property type="match status" value="1"/>
</dbReference>
<sequence>MGRLSWQVAAAAAVGLALTLEALPWVLRWLRSRRRRPRREALFFPSQVTCTEALLRAPGAELAELPEGCPCGLPHGESALSRLLRALLAARASLDLCLFAFSSPQLGRAVQLLHQRGVRVRVVTDCDYMALNGSQIGLLRKAGIQVRHDQDPGYMHHKFAIVDKRVLITGSLNWTTQAIQNNRENVLITEDDEYVRLFLEEFERIWEQFNPTKYTFFPPKKSHGSCAPPVSRAGGRLLSWHRTCGTSSESQT</sequence>
<gene>
    <name type="primary">PLD6</name>
</gene>
<keyword id="KW-0221">Differentiation</keyword>
<keyword id="KW-0255">Endonuclease</keyword>
<keyword id="KW-0333">Golgi apparatus</keyword>
<keyword id="KW-0378">Hydrolase</keyword>
<keyword id="KW-0442">Lipid degradation</keyword>
<keyword id="KW-0443">Lipid metabolism</keyword>
<keyword id="KW-0469">Meiosis</keyword>
<keyword id="KW-0472">Membrane</keyword>
<keyword id="KW-0479">Metal-binding</keyword>
<keyword id="KW-0496">Mitochondrion</keyword>
<keyword id="KW-1000">Mitochondrion outer membrane</keyword>
<keyword id="KW-0540">Nuclease</keyword>
<keyword id="KW-1267">Proteomics identification</keyword>
<keyword id="KW-1185">Reference proteome</keyword>
<keyword id="KW-0744">Spermatogenesis</keyword>
<keyword id="KW-0812">Transmembrane</keyword>
<keyword id="KW-1133">Transmembrane helix</keyword>
<keyword id="KW-0862">Zinc</keyword>
<keyword id="KW-0863">Zinc-finger</keyword>
<evidence type="ECO:0000250" key="1">
    <source>
        <dbReference type="UniProtKB" id="Q5SWZ9"/>
    </source>
</evidence>
<evidence type="ECO:0000250" key="2">
    <source>
        <dbReference type="UniProtKB" id="Q9VKD7"/>
    </source>
</evidence>
<evidence type="ECO:0000255" key="3"/>
<evidence type="ECO:0000255" key="4">
    <source>
        <dbReference type="PROSITE-ProRule" id="PRU00153"/>
    </source>
</evidence>
<evidence type="ECO:0000269" key="5">
    <source>
    </source>
</evidence>
<evidence type="ECO:0000269" key="6">
    <source>
    </source>
</evidence>
<evidence type="ECO:0000269" key="7">
    <source>
    </source>
</evidence>
<evidence type="ECO:0000269" key="8">
    <source>
    </source>
</evidence>
<evidence type="ECO:0000269" key="9">
    <source>
    </source>
</evidence>
<evidence type="ECO:0000269" key="10">
    <source>
    </source>
</evidence>
<evidence type="ECO:0000269" key="11">
    <source>
    </source>
</evidence>
<evidence type="ECO:0000269" key="12">
    <source>
    </source>
</evidence>
<evidence type="ECO:0000269" key="13">
    <source>
    </source>
</evidence>
<evidence type="ECO:0000303" key="14">
    <source>
    </source>
</evidence>
<evidence type="ECO:0000303" key="15">
    <source>
    </source>
</evidence>
<evidence type="ECO:0000303" key="16">
    <source>
    </source>
</evidence>
<evidence type="ECO:0000305" key="17"/>
<evidence type="ECO:0000305" key="18">
    <source>
    </source>
</evidence>